<reference key="1">
    <citation type="journal article" date="2010" name="J. Bacteriol.">
        <title>Genome sequence of the deep-rooted Yersinia pestis strain Angola reveals new insights into the evolution and pangenome of the plague bacterium.</title>
        <authorList>
            <person name="Eppinger M."/>
            <person name="Worsham P.L."/>
            <person name="Nikolich M.P."/>
            <person name="Riley D.R."/>
            <person name="Sebastian Y."/>
            <person name="Mou S."/>
            <person name="Achtman M."/>
            <person name="Lindler L.E."/>
            <person name="Ravel J."/>
        </authorList>
    </citation>
    <scope>NUCLEOTIDE SEQUENCE [LARGE SCALE GENOMIC DNA]</scope>
    <source>
        <strain>Angola</strain>
    </source>
</reference>
<organism>
    <name type="scientific">Yersinia pestis bv. Antiqua (strain Angola)</name>
    <dbReference type="NCBI Taxonomy" id="349746"/>
    <lineage>
        <taxon>Bacteria</taxon>
        <taxon>Pseudomonadati</taxon>
        <taxon>Pseudomonadota</taxon>
        <taxon>Gammaproteobacteria</taxon>
        <taxon>Enterobacterales</taxon>
        <taxon>Yersiniaceae</taxon>
        <taxon>Yersinia</taxon>
    </lineage>
</organism>
<name>GLMM_YERPG</name>
<dbReference type="EC" id="5.4.2.10" evidence="1"/>
<dbReference type="EMBL" id="CP000901">
    <property type="protein sequence ID" value="ABX84870.1"/>
    <property type="molecule type" value="Genomic_DNA"/>
</dbReference>
<dbReference type="RefSeq" id="WP_002210189.1">
    <property type="nucleotide sequence ID" value="NZ_CP009935.1"/>
</dbReference>
<dbReference type="SMR" id="A9R599"/>
<dbReference type="GeneID" id="57975214"/>
<dbReference type="KEGG" id="ypg:YpAngola_A3987"/>
<dbReference type="PATRIC" id="fig|349746.12.peg.713"/>
<dbReference type="GO" id="GO:0005829">
    <property type="term" value="C:cytosol"/>
    <property type="evidence" value="ECO:0007669"/>
    <property type="project" value="TreeGrafter"/>
</dbReference>
<dbReference type="GO" id="GO:0000287">
    <property type="term" value="F:magnesium ion binding"/>
    <property type="evidence" value="ECO:0007669"/>
    <property type="project" value="UniProtKB-UniRule"/>
</dbReference>
<dbReference type="GO" id="GO:0008966">
    <property type="term" value="F:phosphoglucosamine mutase activity"/>
    <property type="evidence" value="ECO:0007669"/>
    <property type="project" value="UniProtKB-UniRule"/>
</dbReference>
<dbReference type="GO" id="GO:0004615">
    <property type="term" value="F:phosphomannomutase activity"/>
    <property type="evidence" value="ECO:0007669"/>
    <property type="project" value="TreeGrafter"/>
</dbReference>
<dbReference type="GO" id="GO:0005975">
    <property type="term" value="P:carbohydrate metabolic process"/>
    <property type="evidence" value="ECO:0007669"/>
    <property type="project" value="InterPro"/>
</dbReference>
<dbReference type="GO" id="GO:0009252">
    <property type="term" value="P:peptidoglycan biosynthetic process"/>
    <property type="evidence" value="ECO:0007669"/>
    <property type="project" value="TreeGrafter"/>
</dbReference>
<dbReference type="GO" id="GO:0006048">
    <property type="term" value="P:UDP-N-acetylglucosamine biosynthetic process"/>
    <property type="evidence" value="ECO:0007669"/>
    <property type="project" value="TreeGrafter"/>
</dbReference>
<dbReference type="CDD" id="cd05802">
    <property type="entry name" value="GlmM"/>
    <property type="match status" value="1"/>
</dbReference>
<dbReference type="FunFam" id="3.30.310.50:FF:000001">
    <property type="entry name" value="Phosphoglucosamine mutase"/>
    <property type="match status" value="1"/>
</dbReference>
<dbReference type="FunFam" id="3.40.120.10:FF:000001">
    <property type="entry name" value="Phosphoglucosamine mutase"/>
    <property type="match status" value="1"/>
</dbReference>
<dbReference type="FunFam" id="3.40.120.10:FF:000002">
    <property type="entry name" value="Phosphoglucosamine mutase"/>
    <property type="match status" value="1"/>
</dbReference>
<dbReference type="Gene3D" id="3.40.120.10">
    <property type="entry name" value="Alpha-D-Glucose-1,6-Bisphosphate, subunit A, domain 3"/>
    <property type="match status" value="3"/>
</dbReference>
<dbReference type="Gene3D" id="3.30.310.50">
    <property type="entry name" value="Alpha-D-phosphohexomutase, C-terminal domain"/>
    <property type="match status" value="1"/>
</dbReference>
<dbReference type="HAMAP" id="MF_01554_B">
    <property type="entry name" value="GlmM_B"/>
    <property type="match status" value="1"/>
</dbReference>
<dbReference type="InterPro" id="IPR005844">
    <property type="entry name" value="A-D-PHexomutase_a/b/a-I"/>
</dbReference>
<dbReference type="InterPro" id="IPR016055">
    <property type="entry name" value="A-D-PHexomutase_a/b/a-I/II/III"/>
</dbReference>
<dbReference type="InterPro" id="IPR005845">
    <property type="entry name" value="A-D-PHexomutase_a/b/a-II"/>
</dbReference>
<dbReference type="InterPro" id="IPR005846">
    <property type="entry name" value="A-D-PHexomutase_a/b/a-III"/>
</dbReference>
<dbReference type="InterPro" id="IPR005843">
    <property type="entry name" value="A-D-PHexomutase_C"/>
</dbReference>
<dbReference type="InterPro" id="IPR036900">
    <property type="entry name" value="A-D-PHexomutase_C_sf"/>
</dbReference>
<dbReference type="InterPro" id="IPR016066">
    <property type="entry name" value="A-D-PHexomutase_CS"/>
</dbReference>
<dbReference type="InterPro" id="IPR005841">
    <property type="entry name" value="Alpha-D-phosphohexomutase_SF"/>
</dbReference>
<dbReference type="InterPro" id="IPR006352">
    <property type="entry name" value="GlmM_bact"/>
</dbReference>
<dbReference type="InterPro" id="IPR050060">
    <property type="entry name" value="Phosphoglucosamine_mutase"/>
</dbReference>
<dbReference type="NCBIfam" id="TIGR01455">
    <property type="entry name" value="glmM"/>
    <property type="match status" value="1"/>
</dbReference>
<dbReference type="NCBIfam" id="NF008139">
    <property type="entry name" value="PRK10887.1"/>
    <property type="match status" value="1"/>
</dbReference>
<dbReference type="PANTHER" id="PTHR42946:SF1">
    <property type="entry name" value="PHOSPHOGLUCOMUTASE (ALPHA-D-GLUCOSE-1,6-BISPHOSPHATE-DEPENDENT)"/>
    <property type="match status" value="1"/>
</dbReference>
<dbReference type="PANTHER" id="PTHR42946">
    <property type="entry name" value="PHOSPHOHEXOSE MUTASE"/>
    <property type="match status" value="1"/>
</dbReference>
<dbReference type="Pfam" id="PF02878">
    <property type="entry name" value="PGM_PMM_I"/>
    <property type="match status" value="1"/>
</dbReference>
<dbReference type="Pfam" id="PF02879">
    <property type="entry name" value="PGM_PMM_II"/>
    <property type="match status" value="1"/>
</dbReference>
<dbReference type="Pfam" id="PF02880">
    <property type="entry name" value="PGM_PMM_III"/>
    <property type="match status" value="1"/>
</dbReference>
<dbReference type="Pfam" id="PF00408">
    <property type="entry name" value="PGM_PMM_IV"/>
    <property type="match status" value="1"/>
</dbReference>
<dbReference type="PRINTS" id="PR00509">
    <property type="entry name" value="PGMPMM"/>
</dbReference>
<dbReference type="SUPFAM" id="SSF55957">
    <property type="entry name" value="Phosphoglucomutase, C-terminal domain"/>
    <property type="match status" value="1"/>
</dbReference>
<dbReference type="SUPFAM" id="SSF53738">
    <property type="entry name" value="Phosphoglucomutase, first 3 domains"/>
    <property type="match status" value="3"/>
</dbReference>
<dbReference type="PROSITE" id="PS00710">
    <property type="entry name" value="PGM_PMM"/>
    <property type="match status" value="1"/>
</dbReference>
<comment type="function">
    <text evidence="1">Catalyzes the conversion of glucosamine-6-phosphate to glucosamine-1-phosphate.</text>
</comment>
<comment type="catalytic activity">
    <reaction evidence="1">
        <text>alpha-D-glucosamine 1-phosphate = D-glucosamine 6-phosphate</text>
        <dbReference type="Rhea" id="RHEA:23424"/>
        <dbReference type="ChEBI" id="CHEBI:58516"/>
        <dbReference type="ChEBI" id="CHEBI:58725"/>
        <dbReference type="EC" id="5.4.2.10"/>
    </reaction>
</comment>
<comment type="cofactor">
    <cofactor evidence="1">
        <name>Mg(2+)</name>
        <dbReference type="ChEBI" id="CHEBI:18420"/>
    </cofactor>
    <text evidence="1">Binds 1 Mg(2+) ion per subunit.</text>
</comment>
<comment type="PTM">
    <text evidence="1">Activated by phosphorylation.</text>
</comment>
<comment type="similarity">
    <text evidence="1">Belongs to the phosphohexose mutase family.</text>
</comment>
<keyword id="KW-0413">Isomerase</keyword>
<keyword id="KW-0460">Magnesium</keyword>
<keyword id="KW-0479">Metal-binding</keyword>
<keyword id="KW-0597">Phosphoprotein</keyword>
<feature type="chain" id="PRO_1000201156" description="Phosphoglucosamine mutase">
    <location>
        <begin position="1"/>
        <end position="446"/>
    </location>
</feature>
<feature type="active site" description="Phosphoserine intermediate" evidence="1">
    <location>
        <position position="102"/>
    </location>
</feature>
<feature type="binding site" description="via phosphate group" evidence="1">
    <location>
        <position position="102"/>
    </location>
    <ligand>
        <name>Mg(2+)</name>
        <dbReference type="ChEBI" id="CHEBI:18420"/>
    </ligand>
</feature>
<feature type="binding site" evidence="1">
    <location>
        <position position="241"/>
    </location>
    <ligand>
        <name>Mg(2+)</name>
        <dbReference type="ChEBI" id="CHEBI:18420"/>
    </ligand>
</feature>
<feature type="binding site" evidence="1">
    <location>
        <position position="243"/>
    </location>
    <ligand>
        <name>Mg(2+)</name>
        <dbReference type="ChEBI" id="CHEBI:18420"/>
    </ligand>
</feature>
<feature type="binding site" evidence="1">
    <location>
        <position position="245"/>
    </location>
    <ligand>
        <name>Mg(2+)</name>
        <dbReference type="ChEBI" id="CHEBI:18420"/>
    </ligand>
</feature>
<feature type="modified residue" description="Phosphoserine" evidence="1">
    <location>
        <position position="102"/>
    </location>
</feature>
<sequence>MSNRKYFGTDGIRGKVGESPITPDFVLKLGWAAGKVLARHGSRKIIIGKDTRISGYMLESALEAGLAAAGLSALFTGPMPTPAVAYLTRTFRAEAGIVISASHNPFYDNGIKFFSIDGTKLPDDVEEAIEAEMEKPLTCVESAELGKANRIVDAAGRYIEFCKGTFPSELSLNELKIVVDCANGATYHIAPSVLRELGATVITIGCEPDGMNINEECGATDVRLLQERVLAEGAHVGLAFDGDGDRLMMVDHLGNKVDGDQILYIIAREGLRQGQLKGGAVGTLMSNMGLQLALKDLGIPFVRAKVGDRYVLEAMQEKGWRIGAENSGHVILLDKTTTGDGIVAGLQVLTAMVRNHMSLHDLCSGMKLLPQILVNVRFSGEHNPLKSDEVEEVTRQVEKELGGRGRVLLRKSGTEPLIRVMVEGDAEESLIAEMANRIADAVKAAG</sequence>
<proteinExistence type="inferred from homology"/>
<gene>
    <name evidence="1" type="primary">glmM</name>
    <name type="ordered locus">YpAngola_A3987</name>
</gene>
<evidence type="ECO:0000255" key="1">
    <source>
        <dbReference type="HAMAP-Rule" id="MF_01554"/>
    </source>
</evidence>
<protein>
    <recommendedName>
        <fullName evidence="1">Phosphoglucosamine mutase</fullName>
        <ecNumber evidence="1">5.4.2.10</ecNumber>
    </recommendedName>
</protein>
<accession>A9R599</accession>